<name>RIP_LUFAC</name>
<organism>
    <name type="scientific">Luffa acutangula</name>
    <name type="common">Ridged gourd</name>
    <name type="synonym">Cucumis acutangulus</name>
    <dbReference type="NCBI Taxonomy" id="56866"/>
    <lineage>
        <taxon>Eukaryota</taxon>
        <taxon>Viridiplantae</taxon>
        <taxon>Streptophyta</taxon>
        <taxon>Embryophyta</taxon>
        <taxon>Tracheophyta</taxon>
        <taxon>Spermatophyta</taxon>
        <taxon>Magnoliopsida</taxon>
        <taxon>eudicotyledons</taxon>
        <taxon>Gunneridae</taxon>
        <taxon>Pentapetalae</taxon>
        <taxon>rosids</taxon>
        <taxon>fabids</taxon>
        <taxon>Cucurbitales</taxon>
        <taxon>Cucurbitaceae</taxon>
        <taxon>Sicyoeae</taxon>
        <taxon>Luffa</taxon>
    </lineage>
</organism>
<sequence>DVSFSLSGSSSTSYSKFIGALRKALPSNGTVYNITLLLSSASGASRYTLMKLSNYDGKAITVAIDVTNVYIMGYLVNSTSYFFNESDAKLASQYVFAGSTIVTLPYSGNYEKLQTAAGKIREKIPLGFPALDSAITTLFHYDSTAAAAAFLVIIQTTAESSRFKYIEGQIIMRISKNGVPSLATISLENEWSALSKQIQLAQTNNGTFKTPVVIMDAGGQRVEIGNVGSKVVTKNIQLLLN</sequence>
<reference evidence="5" key="1">
    <citation type="journal article" date="2007" name="BMC Struct. Biol.">
        <title>X-ray sequence and crystal structure of luffaculin 1, a novel type 1 ribosome-inactivating protein.</title>
        <authorList>
            <person name="Hou X."/>
            <person name="Chen M."/>
            <person name="Chen L."/>
            <person name="Meehan E.J."/>
            <person name="Xie J."/>
            <person name="Huang M."/>
        </authorList>
    </citation>
    <scope>PROTEIN SEQUENCE OF 1-10</scope>
    <scope>X-RAY CRYSTALLOGRAPHY (1.0 ANGSTROMS)</scope>
    <scope>GLYCOSYLATION AT ASN-77 AND ASN-84</scope>
    <source>
        <tissue evidence="3">Seed</tissue>
    </source>
</reference>
<comment type="catalytic activity">
    <reaction evidence="5">
        <text>Endohydrolysis of the N-glycosidic bond at one specific adenosine on the 28S rRNA.</text>
        <dbReference type="EC" id="3.2.2.22"/>
    </reaction>
</comment>
<comment type="similarity">
    <text evidence="2">Belongs to the ribosome-inactivating protein family. Type 1 RIP subfamily.</text>
</comment>
<dbReference type="EC" id="3.2.2.22"/>
<dbReference type="PDB" id="2OQA">
    <property type="method" value="X-ray"/>
    <property type="resolution" value="1.00 A"/>
    <property type="chains" value="A/B=1-241"/>
</dbReference>
<dbReference type="PDBsum" id="2OQA"/>
<dbReference type="SMR" id="P84530"/>
<dbReference type="iPTMnet" id="P84530"/>
<dbReference type="EvolutionaryTrace" id="P84530"/>
<dbReference type="GO" id="GO:0030598">
    <property type="term" value="F:rRNA N-glycosylase activity"/>
    <property type="evidence" value="ECO:0007669"/>
    <property type="project" value="UniProtKB-EC"/>
</dbReference>
<dbReference type="GO" id="GO:0090729">
    <property type="term" value="F:toxin activity"/>
    <property type="evidence" value="ECO:0007669"/>
    <property type="project" value="UniProtKB-KW"/>
</dbReference>
<dbReference type="GO" id="GO:0006952">
    <property type="term" value="P:defense response"/>
    <property type="evidence" value="ECO:0007669"/>
    <property type="project" value="UniProtKB-KW"/>
</dbReference>
<dbReference type="GO" id="GO:0017148">
    <property type="term" value="P:negative regulation of translation"/>
    <property type="evidence" value="ECO:0007669"/>
    <property type="project" value="UniProtKB-KW"/>
</dbReference>
<dbReference type="Gene3D" id="3.40.420.10">
    <property type="entry name" value="Ricin (A subunit), domain 1"/>
    <property type="match status" value="1"/>
</dbReference>
<dbReference type="Gene3D" id="4.10.470.10">
    <property type="entry name" value="Ricin (A Subunit), domain 2"/>
    <property type="match status" value="1"/>
</dbReference>
<dbReference type="InterPro" id="IPR036041">
    <property type="entry name" value="Ribosome-inact_prot_sf"/>
</dbReference>
<dbReference type="InterPro" id="IPR017989">
    <property type="entry name" value="Ribosome_inactivat_1/2"/>
</dbReference>
<dbReference type="InterPro" id="IPR001574">
    <property type="entry name" value="Ribosome_inactivat_prot"/>
</dbReference>
<dbReference type="InterPro" id="IPR017988">
    <property type="entry name" value="Ribosome_inactivat_prot_CS"/>
</dbReference>
<dbReference type="InterPro" id="IPR016138">
    <property type="entry name" value="Ribosome_inactivat_prot_sub1"/>
</dbReference>
<dbReference type="InterPro" id="IPR016139">
    <property type="entry name" value="Ribosome_inactivat_prot_sub2"/>
</dbReference>
<dbReference type="PANTHER" id="PTHR33453">
    <property type="match status" value="1"/>
</dbReference>
<dbReference type="PANTHER" id="PTHR33453:SF34">
    <property type="entry name" value="RIBOSOME-INACTIVATING PROTEIN"/>
    <property type="match status" value="1"/>
</dbReference>
<dbReference type="Pfam" id="PF00161">
    <property type="entry name" value="RIP"/>
    <property type="match status" value="1"/>
</dbReference>
<dbReference type="PRINTS" id="PR00396">
    <property type="entry name" value="SHIGARICIN"/>
</dbReference>
<dbReference type="SUPFAM" id="SSF56371">
    <property type="entry name" value="Ribosome inactivating proteins (RIP)"/>
    <property type="match status" value="1"/>
</dbReference>
<dbReference type="PROSITE" id="PS00275">
    <property type="entry name" value="SHIGA_RICIN"/>
    <property type="match status" value="1"/>
</dbReference>
<accession>P84530</accession>
<evidence type="ECO:0000250" key="1">
    <source>
        <dbReference type="UniProtKB" id="P16094"/>
    </source>
</evidence>
<evidence type="ECO:0000255" key="2"/>
<evidence type="ECO:0000269" key="3">
    <source>
    </source>
</evidence>
<evidence type="ECO:0000303" key="4">
    <source>
    </source>
</evidence>
<evidence type="ECO:0000305" key="5"/>
<evidence type="ECO:0007829" key="6">
    <source>
        <dbReference type="PDB" id="2OQA"/>
    </source>
</evidence>
<keyword id="KW-0002">3D-structure</keyword>
<keyword id="KW-0903">Direct protein sequencing</keyword>
<keyword id="KW-0325">Glycoprotein</keyword>
<keyword id="KW-0378">Hydrolase</keyword>
<keyword id="KW-0611">Plant defense</keyword>
<keyword id="KW-0652">Protein synthesis inhibitor</keyword>
<keyword id="KW-0800">Toxin</keyword>
<proteinExistence type="evidence at protein level"/>
<protein>
    <recommendedName>
        <fullName evidence="4">Ribosome-inactivating protein luffaculin 1</fullName>
        <ecNumber>3.2.2.22</ecNumber>
    </recommendedName>
    <alternativeName>
        <fullName evidence="4">rRNA N-glycosidase</fullName>
    </alternativeName>
</protein>
<feature type="chain" id="PRO_0000221417" description="Ribosome-inactivating protein luffaculin 1">
    <location>
        <begin position="1"/>
        <end position="241"/>
    </location>
</feature>
<feature type="active site" evidence="1">
    <location>
        <position position="159"/>
    </location>
</feature>
<feature type="glycosylation site" description="N-linked (GlcNAc...) asparagine" evidence="2">
    <location>
        <position position="28"/>
    </location>
</feature>
<feature type="glycosylation site" description="N-linked (GlcNAc...) asparagine" evidence="2">
    <location>
        <position position="33"/>
    </location>
</feature>
<feature type="glycosylation site" description="N-linked (GlcNAc...) asparagine" evidence="3">
    <location>
        <position position="77"/>
    </location>
</feature>
<feature type="glycosylation site" description="N-linked (GlcNAc...) asparagine" evidence="3">
    <location>
        <position position="84"/>
    </location>
</feature>
<feature type="glycosylation site" description="N-linked (GlcNAc...) asparagine" evidence="2">
    <location>
        <position position="205"/>
    </location>
</feature>
<feature type="strand" evidence="6">
    <location>
        <begin position="2"/>
        <end position="6"/>
    </location>
</feature>
<feature type="helix" evidence="6">
    <location>
        <begin position="11"/>
        <end position="24"/>
    </location>
</feature>
<feature type="strand" evidence="6">
    <location>
        <begin position="27"/>
        <end position="31"/>
    </location>
</feature>
<feature type="strand" evidence="6">
    <location>
        <begin position="34"/>
        <end position="37"/>
    </location>
</feature>
<feature type="helix" evidence="6">
    <location>
        <begin position="43"/>
        <end position="46"/>
    </location>
</feature>
<feature type="strand" evidence="6">
    <location>
        <begin position="47"/>
        <end position="53"/>
    </location>
</feature>
<feature type="strand" evidence="6">
    <location>
        <begin position="59"/>
        <end position="65"/>
    </location>
</feature>
<feature type="turn" evidence="6">
    <location>
        <begin position="66"/>
        <end position="68"/>
    </location>
</feature>
<feature type="strand" evidence="6">
    <location>
        <begin position="71"/>
        <end position="76"/>
    </location>
</feature>
<feature type="strand" evidence="6">
    <location>
        <begin position="79"/>
        <end position="82"/>
    </location>
</feature>
<feature type="helix" evidence="6">
    <location>
        <begin position="86"/>
        <end position="91"/>
    </location>
</feature>
<feature type="turn" evidence="6">
    <location>
        <begin position="92"/>
        <end position="94"/>
    </location>
</feature>
<feature type="strand" evidence="6">
    <location>
        <begin position="99"/>
        <end position="103"/>
    </location>
</feature>
<feature type="helix" evidence="6">
    <location>
        <begin position="110"/>
        <end position="117"/>
    </location>
</feature>
<feature type="helix" evidence="6">
    <location>
        <begin position="121"/>
        <end position="123"/>
    </location>
</feature>
<feature type="helix" evidence="6">
    <location>
        <begin position="128"/>
        <end position="139"/>
    </location>
</feature>
<feature type="turn" evidence="6">
    <location>
        <begin position="143"/>
        <end position="145"/>
    </location>
</feature>
<feature type="helix" evidence="6">
    <location>
        <begin position="146"/>
        <end position="156"/>
    </location>
</feature>
<feature type="helix" evidence="6">
    <location>
        <begin position="158"/>
        <end position="162"/>
    </location>
</feature>
<feature type="helix" evidence="6">
    <location>
        <begin position="164"/>
        <end position="172"/>
    </location>
</feature>
<feature type="strand" evidence="6">
    <location>
        <begin position="174"/>
        <end position="176"/>
    </location>
</feature>
<feature type="helix" evidence="6">
    <location>
        <begin position="182"/>
        <end position="201"/>
    </location>
</feature>
<feature type="turn" evidence="6">
    <location>
        <begin position="202"/>
        <end position="206"/>
    </location>
</feature>
<feature type="strand" evidence="6">
    <location>
        <begin position="207"/>
        <end position="215"/>
    </location>
</feature>
<feature type="strand" evidence="6">
    <location>
        <begin position="221"/>
        <end position="226"/>
    </location>
</feature>
<feature type="helix" evidence="6">
    <location>
        <begin position="230"/>
        <end position="233"/>
    </location>
</feature>